<proteinExistence type="inferred from homology"/>
<protein>
    <recommendedName>
        <fullName>Uncharacterized MFS-type transporter C09D4.1</fullName>
    </recommendedName>
</protein>
<organism>
    <name type="scientific">Caenorhabditis elegans</name>
    <dbReference type="NCBI Taxonomy" id="6239"/>
    <lineage>
        <taxon>Eukaryota</taxon>
        <taxon>Metazoa</taxon>
        <taxon>Ecdysozoa</taxon>
        <taxon>Nematoda</taxon>
        <taxon>Chromadorea</taxon>
        <taxon>Rhabditida</taxon>
        <taxon>Rhabditina</taxon>
        <taxon>Rhabditomorpha</taxon>
        <taxon>Rhabditoidea</taxon>
        <taxon>Rhabditidae</taxon>
        <taxon>Peloderinae</taxon>
        <taxon>Caenorhabditis</taxon>
    </lineage>
</organism>
<gene>
    <name type="ORF">C09D4.1</name>
</gene>
<accession>O01735</accession>
<accession>Q5W618</accession>
<evidence type="ECO:0000250" key="1"/>
<evidence type="ECO:0000255" key="2"/>
<evidence type="ECO:0000256" key="3">
    <source>
        <dbReference type="SAM" id="MobiDB-lite"/>
    </source>
</evidence>
<evidence type="ECO:0000305" key="4"/>
<keyword id="KW-0025">Alternative splicing</keyword>
<keyword id="KW-0472">Membrane</keyword>
<keyword id="KW-1185">Reference proteome</keyword>
<keyword id="KW-0812">Transmembrane</keyword>
<keyword id="KW-1133">Transmembrane helix</keyword>
<keyword id="KW-0813">Transport</keyword>
<feature type="chain" id="PRO_0000084858" description="Uncharacterized MFS-type transporter C09D4.1">
    <location>
        <begin position="1"/>
        <end position="586"/>
    </location>
</feature>
<feature type="transmembrane region" description="Helical" evidence="2">
    <location>
        <begin position="151"/>
        <end position="171"/>
    </location>
</feature>
<feature type="transmembrane region" description="Helical" evidence="2">
    <location>
        <begin position="191"/>
        <end position="211"/>
    </location>
</feature>
<feature type="transmembrane region" description="Helical" evidence="2">
    <location>
        <begin position="218"/>
        <end position="238"/>
    </location>
</feature>
<feature type="transmembrane region" description="Helical" evidence="2">
    <location>
        <begin position="243"/>
        <end position="263"/>
    </location>
</feature>
<feature type="transmembrane region" description="Helical" evidence="2">
    <location>
        <begin position="283"/>
        <end position="303"/>
    </location>
</feature>
<feature type="transmembrane region" description="Helical" evidence="2">
    <location>
        <begin position="317"/>
        <end position="337"/>
    </location>
</feature>
<feature type="transmembrane region" description="Helical" evidence="2">
    <location>
        <begin position="375"/>
        <end position="395"/>
    </location>
</feature>
<feature type="transmembrane region" description="Helical" evidence="2">
    <location>
        <begin position="413"/>
        <end position="433"/>
    </location>
</feature>
<feature type="transmembrane region" description="Helical" evidence="2">
    <location>
        <begin position="441"/>
        <end position="461"/>
    </location>
</feature>
<feature type="transmembrane region" description="Helical" evidence="2">
    <location>
        <begin position="466"/>
        <end position="486"/>
    </location>
</feature>
<feature type="transmembrane region" description="Helical" evidence="2">
    <location>
        <begin position="513"/>
        <end position="533"/>
    </location>
</feature>
<feature type="transmembrane region" description="Helical" evidence="2">
    <location>
        <begin position="536"/>
        <end position="556"/>
    </location>
</feature>
<feature type="region of interest" description="Disordered" evidence="3">
    <location>
        <begin position="17"/>
        <end position="64"/>
    </location>
</feature>
<feature type="region of interest" description="Disordered" evidence="3">
    <location>
        <begin position="80"/>
        <end position="123"/>
    </location>
</feature>
<feature type="compositionally biased region" description="Polar residues" evidence="3">
    <location>
        <begin position="28"/>
        <end position="37"/>
    </location>
</feature>
<feature type="compositionally biased region" description="Low complexity" evidence="3">
    <location>
        <begin position="38"/>
        <end position="52"/>
    </location>
</feature>
<feature type="compositionally biased region" description="Low complexity" evidence="3">
    <location>
        <begin position="80"/>
        <end position="91"/>
    </location>
</feature>
<feature type="compositionally biased region" description="Basic and acidic residues" evidence="3">
    <location>
        <begin position="94"/>
        <end position="110"/>
    </location>
</feature>
<feature type="compositionally biased region" description="Gly residues" evidence="3">
    <location>
        <begin position="112"/>
        <end position="123"/>
    </location>
</feature>
<feature type="splice variant" id="VSP_015554" description="In isoform b." evidence="4">
    <location>
        <begin position="1"/>
        <end position="111"/>
    </location>
</feature>
<sequence>MGGKAQFIRDFILKGPVRRTVPIEPVEPSTSGSIAWTSSESGSAHSSRVSSSPITPRKSAETEETLPTCLVRARGSSSAHSCSAATTSQQSNRQSKEHRIGGIKKEEKPIEMGGGSSENGGANGCSNGDNHHVLLMEKQEKIEPKVFRKRWVILVIFMFLSGSNGAQWIQYSIIANIISDYYKVSFQAVDWTSMIYMLTYILFFIPAAWLLDKWGLRLSVLLGALGNCVGAWIKLLSTHPDSFWVTFVGQTIVGASQMFTLGIPPRLAAVWFGPDEVSRACALGVFGNQLGIAVGFVLPPLIVSNGSVEHVTYDLNTLFLGSAVLNTSILALVICFFTARPAVPPSLAQVNALEEKTFDNNFWGTLRKLMTSRDFVILFITYGINTGVFYAISTLLSQMVLSVYPNETETVGYVGLLIVVAGMAGSVVGGFILDKFKKFKLTTIMIYLFSFVGMLSFTLTIDLDSMVLVFINAALLGFFMTGYLPIGFEFAAEITYPAAEGTTSGLLNASAQIFGIALTWLMGIVMHGFGTFTSNIIMSSCLVVGTILTCFIREDLKRQKAHSVQCTIPTSETQLTSCTLQQNEHF</sequence>
<dbReference type="EMBL" id="FO080461">
    <property type="protein sequence ID" value="CCD63885.1"/>
    <property type="molecule type" value="Genomic_DNA"/>
</dbReference>
<dbReference type="EMBL" id="FO080461">
    <property type="protein sequence ID" value="CCD63886.1"/>
    <property type="molecule type" value="Genomic_DNA"/>
</dbReference>
<dbReference type="PIR" id="T29139">
    <property type="entry name" value="T29139"/>
</dbReference>
<dbReference type="RefSeq" id="NP_001020991.1">
    <molecule id="O01735-1"/>
    <property type="nucleotide sequence ID" value="NM_001025820.5"/>
</dbReference>
<dbReference type="RefSeq" id="NP_001020992.1">
    <molecule id="O01735-2"/>
    <property type="nucleotide sequence ID" value="NM_001025821.6"/>
</dbReference>
<dbReference type="SMR" id="O01735"/>
<dbReference type="BioGRID" id="37661">
    <property type="interactions" value="4"/>
</dbReference>
<dbReference type="FunCoup" id="O01735">
    <property type="interactions" value="1771"/>
</dbReference>
<dbReference type="STRING" id="6239.C09D4.1a.1"/>
<dbReference type="iPTMnet" id="O01735"/>
<dbReference type="PaxDb" id="6239-C09D4.1a"/>
<dbReference type="PeptideAtlas" id="O01735"/>
<dbReference type="EnsemblMetazoa" id="C09D4.1a.1">
    <molecule id="O01735-1"/>
    <property type="protein sequence ID" value="C09D4.1a.1"/>
    <property type="gene ID" value="WBGene00015632"/>
</dbReference>
<dbReference type="EnsemblMetazoa" id="C09D4.1b.1">
    <molecule id="O01735-2"/>
    <property type="protein sequence ID" value="C09D4.1b.1"/>
    <property type="gene ID" value="WBGene00015632"/>
</dbReference>
<dbReference type="EnsemblMetazoa" id="C09D4.1b.2">
    <molecule id="O01735-2"/>
    <property type="protein sequence ID" value="C09D4.1b.2"/>
    <property type="gene ID" value="WBGene00015632"/>
</dbReference>
<dbReference type="EnsemblMetazoa" id="C09D4.1b.3">
    <molecule id="O01735-2"/>
    <property type="protein sequence ID" value="C09D4.1b.3"/>
    <property type="gene ID" value="WBGene00015632"/>
</dbReference>
<dbReference type="GeneID" id="172203"/>
<dbReference type="KEGG" id="cel:CELE_C09D4.1"/>
<dbReference type="UCSC" id="C09D4.1a">
    <molecule id="O01735-1"/>
    <property type="organism name" value="c. elegans"/>
</dbReference>
<dbReference type="AGR" id="WB:WBGene00015632"/>
<dbReference type="CTD" id="172203"/>
<dbReference type="WormBase" id="C09D4.1a">
    <molecule id="O01735-1"/>
    <property type="protein sequence ID" value="CE27671"/>
    <property type="gene ID" value="WBGene00015632"/>
</dbReference>
<dbReference type="WormBase" id="C09D4.1b">
    <molecule id="O01735-2"/>
    <property type="protein sequence ID" value="CE37705"/>
    <property type="gene ID" value="WBGene00015632"/>
</dbReference>
<dbReference type="eggNOG" id="KOG2563">
    <property type="taxonomic scope" value="Eukaryota"/>
</dbReference>
<dbReference type="GeneTree" id="ENSGT01030000234625"/>
<dbReference type="InParanoid" id="O01735"/>
<dbReference type="OMA" id="LDLMGHN"/>
<dbReference type="OrthoDB" id="422206at2759"/>
<dbReference type="PhylomeDB" id="O01735"/>
<dbReference type="Reactome" id="R-CEL-189451">
    <property type="pathway name" value="Heme biosynthesis"/>
</dbReference>
<dbReference type="Reactome" id="R-CEL-917937">
    <property type="pathway name" value="Iron uptake and transport"/>
</dbReference>
<dbReference type="PRO" id="PR:O01735"/>
<dbReference type="Proteomes" id="UP000001940">
    <property type="component" value="Chromosome I"/>
</dbReference>
<dbReference type="Bgee" id="WBGene00015632">
    <property type="expression patterns" value="Expressed in pharyngeal muscle cell (C elegans) and 3 other cell types or tissues"/>
</dbReference>
<dbReference type="GO" id="GO:0016020">
    <property type="term" value="C:membrane"/>
    <property type="evidence" value="ECO:0000318"/>
    <property type="project" value="GO_Central"/>
</dbReference>
<dbReference type="GO" id="GO:0020037">
    <property type="term" value="F:heme binding"/>
    <property type="evidence" value="ECO:0000318"/>
    <property type="project" value="GO_Central"/>
</dbReference>
<dbReference type="GO" id="GO:0015232">
    <property type="term" value="F:heme transmembrane transporter activity"/>
    <property type="evidence" value="ECO:0000318"/>
    <property type="project" value="GO_Central"/>
</dbReference>
<dbReference type="GO" id="GO:0097037">
    <property type="term" value="P:heme export"/>
    <property type="evidence" value="ECO:0000318"/>
    <property type="project" value="GO_Central"/>
</dbReference>
<dbReference type="CDD" id="cd17398">
    <property type="entry name" value="MFS_FLVCR_like"/>
    <property type="match status" value="1"/>
</dbReference>
<dbReference type="FunFam" id="1.20.1250.20:FF:000101">
    <property type="entry name" value="feline leukemia virus subgroup C receptor-related protein 2"/>
    <property type="match status" value="1"/>
</dbReference>
<dbReference type="FunFam" id="1.20.1250.20:FF:000092">
    <property type="entry name" value="Feline leukemia virus subgroup C receptor-related protein 2 isoform 1"/>
    <property type="match status" value="1"/>
</dbReference>
<dbReference type="Gene3D" id="1.20.1250.20">
    <property type="entry name" value="MFS general substrate transporter like domains"/>
    <property type="match status" value="2"/>
</dbReference>
<dbReference type="InterPro" id="IPR049680">
    <property type="entry name" value="FLVCR1-2_SLC49-like"/>
</dbReference>
<dbReference type="InterPro" id="IPR011701">
    <property type="entry name" value="MFS"/>
</dbReference>
<dbReference type="InterPro" id="IPR020846">
    <property type="entry name" value="MFS_dom"/>
</dbReference>
<dbReference type="InterPro" id="IPR036259">
    <property type="entry name" value="MFS_trans_sf"/>
</dbReference>
<dbReference type="PANTHER" id="PTHR10924:SF4">
    <property type="entry name" value="GH15861P"/>
    <property type="match status" value="1"/>
</dbReference>
<dbReference type="PANTHER" id="PTHR10924">
    <property type="entry name" value="MAJOR FACILITATOR SUPERFAMILY PROTEIN-RELATED"/>
    <property type="match status" value="1"/>
</dbReference>
<dbReference type="Pfam" id="PF07690">
    <property type="entry name" value="MFS_1"/>
    <property type="match status" value="1"/>
</dbReference>
<dbReference type="SUPFAM" id="SSF103473">
    <property type="entry name" value="MFS general substrate transporter"/>
    <property type="match status" value="1"/>
</dbReference>
<dbReference type="PROSITE" id="PS50850">
    <property type="entry name" value="MFS"/>
    <property type="match status" value="1"/>
</dbReference>
<comment type="subcellular location">
    <subcellularLocation>
        <location evidence="1">Membrane</location>
        <topology evidence="1">Multi-pass membrane protein</topology>
    </subcellularLocation>
</comment>
<comment type="alternative products">
    <event type="alternative splicing"/>
    <isoform>
        <id>O01735-1</id>
        <name>a</name>
        <sequence type="displayed"/>
    </isoform>
    <isoform>
        <id>O01735-2</id>
        <name>b</name>
        <sequence type="described" ref="VSP_015554"/>
    </isoform>
</comment>
<comment type="similarity">
    <text evidence="4">Belongs to the major facilitator superfamily. Feline leukemia virus subgroup C receptor (TC 2.A.1.28.1) family.</text>
</comment>
<name>YC91_CAEEL</name>
<reference key="1">
    <citation type="journal article" date="1998" name="Science">
        <title>Genome sequence of the nematode C. elegans: a platform for investigating biology.</title>
        <authorList>
            <consortium name="The C. elegans sequencing consortium"/>
        </authorList>
    </citation>
    <scope>NUCLEOTIDE SEQUENCE [LARGE SCALE GENOMIC DNA]</scope>
    <scope>ALTERNATIVE SPLICING</scope>
    <source>
        <strain>Bristol N2</strain>
    </source>
</reference>